<geneLocation type="chloroplast"/>
<name>YCF56_PYRYE</name>
<feature type="chain" id="PRO_0000277349" description="Uncharacterized protein ycf56">
    <location>
        <begin position="1"/>
        <end position="263"/>
    </location>
</feature>
<accession>Q1XDS9</accession>
<dbReference type="EMBL" id="AP006715">
    <property type="protein sequence ID" value="BAE92332.1"/>
    <property type="molecule type" value="Genomic_DNA"/>
</dbReference>
<dbReference type="RefSeq" id="YP_536889.1">
    <property type="nucleotide sequence ID" value="NC_007932.1"/>
</dbReference>
<dbReference type="SMR" id="Q1XDS9"/>
<dbReference type="GO" id="GO:0009507">
    <property type="term" value="C:chloroplast"/>
    <property type="evidence" value="ECO:0007669"/>
    <property type="project" value="UniProtKB-SubCell"/>
</dbReference>
<dbReference type="GO" id="GO:0042781">
    <property type="term" value="F:3'-tRNA processing endoribonuclease activity"/>
    <property type="evidence" value="ECO:0007669"/>
    <property type="project" value="TreeGrafter"/>
</dbReference>
<dbReference type="Gene3D" id="3.60.15.10">
    <property type="entry name" value="Ribonuclease Z/Hydroxyacylglutathione hydrolase-like"/>
    <property type="match status" value="1"/>
</dbReference>
<dbReference type="InterPro" id="IPR036866">
    <property type="entry name" value="RibonucZ/Hydroxyglut_hydro"/>
</dbReference>
<dbReference type="PANTHER" id="PTHR46018">
    <property type="entry name" value="ZINC PHOSPHODIESTERASE ELAC PROTEIN 1"/>
    <property type="match status" value="1"/>
</dbReference>
<dbReference type="PANTHER" id="PTHR46018:SF2">
    <property type="entry name" value="ZINC PHOSPHODIESTERASE ELAC PROTEIN 1"/>
    <property type="match status" value="1"/>
</dbReference>
<dbReference type="SUPFAM" id="SSF56281">
    <property type="entry name" value="Metallo-hydrolase/oxidoreductase"/>
    <property type="match status" value="1"/>
</dbReference>
<keyword id="KW-0150">Chloroplast</keyword>
<keyword id="KW-0934">Plastid</keyword>
<proteinExistence type="inferred from homology"/>
<organism>
    <name type="scientific">Pyropia yezoensis</name>
    <name type="common">Susabi-nori</name>
    <name type="synonym">Porphyra yezoensis</name>
    <dbReference type="NCBI Taxonomy" id="2788"/>
    <lineage>
        <taxon>Eukaryota</taxon>
        <taxon>Rhodophyta</taxon>
        <taxon>Bangiophyceae</taxon>
        <taxon>Bangiales</taxon>
        <taxon>Bangiaceae</taxon>
        <taxon>Pyropia</taxon>
    </lineage>
</organism>
<sequence>MKIILFDNKINSRLNKITLTNYAAKLDQTSEIWLFNCIENIQHIFFKSQLKSSHITKIFISGTSFEYTAGLPGLLSSLTLSGRLHPISIYSPQSLKKYLEACTKYSQTNFSFPINFHNLQYGGQVVNQFYTVICLPLSKKSLLYGFIILKKEKQGVFNLAQAKTLNILQGPIYGKLKEKDNFLSPDGYYLSGQDFSSNTIMGHKISLPLLVRYSRIISEMHWFCSYPIRLNTYSHQQGVKCLPHNVLTDIMKSQIYQDNSFVE</sequence>
<evidence type="ECO:0000305" key="1"/>
<gene>
    <name type="primary">ycf56</name>
</gene>
<reference key="1">
    <citation type="submission" date="2003-11" db="EMBL/GenBank/DDBJ databases">
        <title>Whole genome sequence of Porphyra yezoensis chloroplast.</title>
        <authorList>
            <person name="Kunimoto M."/>
            <person name="Morishima K."/>
            <person name="Yoshikawa M."/>
            <person name="Fukuda S."/>
            <person name="Kobayashi T."/>
            <person name="Kobayashi M."/>
            <person name="Okazaki T."/>
            <person name="Ohara I."/>
            <person name="Nakayama I."/>
        </authorList>
    </citation>
    <scope>NUCLEOTIDE SEQUENCE [LARGE SCALE GENOMIC DNA]</scope>
    <source>
        <strain>U-51</strain>
    </source>
</reference>
<protein>
    <recommendedName>
        <fullName>Uncharacterized protein ycf56</fullName>
    </recommendedName>
</protein>
<comment type="subcellular location">
    <subcellularLocation>
        <location>Plastid</location>
        <location>Chloroplast</location>
    </subcellularLocation>
</comment>
<comment type="similarity">
    <text evidence="1">Belongs to the AtsA family.</text>
</comment>